<dbReference type="EC" id="2.8.1.6" evidence="1"/>
<dbReference type="EMBL" id="AM747720">
    <property type="protein sequence ID" value="CAR50973.1"/>
    <property type="molecule type" value="Genomic_DNA"/>
</dbReference>
<dbReference type="RefSeq" id="WP_006483467.1">
    <property type="nucleotide sequence ID" value="NC_011000.1"/>
</dbReference>
<dbReference type="SMR" id="B4E9L4"/>
<dbReference type="GeneID" id="56559521"/>
<dbReference type="KEGG" id="bcj:BCAL0664"/>
<dbReference type="eggNOG" id="COG0502">
    <property type="taxonomic scope" value="Bacteria"/>
</dbReference>
<dbReference type="HOGENOM" id="CLU_033172_1_2_4"/>
<dbReference type="BioCyc" id="BCEN216591:G1G1V-752-MONOMER"/>
<dbReference type="UniPathway" id="UPA00078">
    <property type="reaction ID" value="UER00162"/>
</dbReference>
<dbReference type="Proteomes" id="UP000001035">
    <property type="component" value="Chromosome 1"/>
</dbReference>
<dbReference type="GO" id="GO:0051537">
    <property type="term" value="F:2 iron, 2 sulfur cluster binding"/>
    <property type="evidence" value="ECO:0007669"/>
    <property type="project" value="UniProtKB-KW"/>
</dbReference>
<dbReference type="GO" id="GO:0051539">
    <property type="term" value="F:4 iron, 4 sulfur cluster binding"/>
    <property type="evidence" value="ECO:0007669"/>
    <property type="project" value="UniProtKB-KW"/>
</dbReference>
<dbReference type="GO" id="GO:0004076">
    <property type="term" value="F:biotin synthase activity"/>
    <property type="evidence" value="ECO:0007669"/>
    <property type="project" value="UniProtKB-UniRule"/>
</dbReference>
<dbReference type="GO" id="GO:0005506">
    <property type="term" value="F:iron ion binding"/>
    <property type="evidence" value="ECO:0007669"/>
    <property type="project" value="UniProtKB-UniRule"/>
</dbReference>
<dbReference type="GO" id="GO:0009102">
    <property type="term" value="P:biotin biosynthetic process"/>
    <property type="evidence" value="ECO:0007669"/>
    <property type="project" value="UniProtKB-UniRule"/>
</dbReference>
<dbReference type="CDD" id="cd01335">
    <property type="entry name" value="Radical_SAM"/>
    <property type="match status" value="1"/>
</dbReference>
<dbReference type="FunFam" id="3.20.20.70:FF:000011">
    <property type="entry name" value="Biotin synthase"/>
    <property type="match status" value="1"/>
</dbReference>
<dbReference type="Gene3D" id="3.20.20.70">
    <property type="entry name" value="Aldolase class I"/>
    <property type="match status" value="1"/>
</dbReference>
<dbReference type="HAMAP" id="MF_01694">
    <property type="entry name" value="BioB"/>
    <property type="match status" value="1"/>
</dbReference>
<dbReference type="InterPro" id="IPR013785">
    <property type="entry name" value="Aldolase_TIM"/>
</dbReference>
<dbReference type="InterPro" id="IPR010722">
    <property type="entry name" value="BATS_dom"/>
</dbReference>
<dbReference type="InterPro" id="IPR002684">
    <property type="entry name" value="Biotin_synth/BioAB"/>
</dbReference>
<dbReference type="InterPro" id="IPR024177">
    <property type="entry name" value="Biotin_synthase"/>
</dbReference>
<dbReference type="InterPro" id="IPR006638">
    <property type="entry name" value="Elp3/MiaA/NifB-like_rSAM"/>
</dbReference>
<dbReference type="InterPro" id="IPR007197">
    <property type="entry name" value="rSAM"/>
</dbReference>
<dbReference type="NCBIfam" id="TIGR00433">
    <property type="entry name" value="bioB"/>
    <property type="match status" value="1"/>
</dbReference>
<dbReference type="PANTHER" id="PTHR22976">
    <property type="entry name" value="BIOTIN SYNTHASE"/>
    <property type="match status" value="1"/>
</dbReference>
<dbReference type="PANTHER" id="PTHR22976:SF2">
    <property type="entry name" value="BIOTIN SYNTHASE, MITOCHONDRIAL"/>
    <property type="match status" value="1"/>
</dbReference>
<dbReference type="Pfam" id="PF06968">
    <property type="entry name" value="BATS"/>
    <property type="match status" value="1"/>
</dbReference>
<dbReference type="Pfam" id="PF04055">
    <property type="entry name" value="Radical_SAM"/>
    <property type="match status" value="1"/>
</dbReference>
<dbReference type="PIRSF" id="PIRSF001619">
    <property type="entry name" value="Biotin_synth"/>
    <property type="match status" value="1"/>
</dbReference>
<dbReference type="SFLD" id="SFLDF00272">
    <property type="entry name" value="biotin_synthase"/>
    <property type="match status" value="1"/>
</dbReference>
<dbReference type="SFLD" id="SFLDG01278">
    <property type="entry name" value="biotin_synthase_like"/>
    <property type="match status" value="1"/>
</dbReference>
<dbReference type="SMART" id="SM00876">
    <property type="entry name" value="BATS"/>
    <property type="match status" value="1"/>
</dbReference>
<dbReference type="SMART" id="SM00729">
    <property type="entry name" value="Elp3"/>
    <property type="match status" value="1"/>
</dbReference>
<dbReference type="SUPFAM" id="SSF102114">
    <property type="entry name" value="Radical SAM enzymes"/>
    <property type="match status" value="1"/>
</dbReference>
<dbReference type="PROSITE" id="PS51918">
    <property type="entry name" value="RADICAL_SAM"/>
    <property type="match status" value="1"/>
</dbReference>
<comment type="function">
    <text evidence="1">Catalyzes the conversion of dethiobiotin (DTB) to biotin by the insertion of a sulfur atom into dethiobiotin via a radical-based mechanism.</text>
</comment>
<comment type="catalytic activity">
    <reaction evidence="1">
        <text>(4R,5S)-dethiobiotin + (sulfur carrier)-SH + 2 reduced [2Fe-2S]-[ferredoxin] + 2 S-adenosyl-L-methionine = (sulfur carrier)-H + biotin + 2 5'-deoxyadenosine + 2 L-methionine + 2 oxidized [2Fe-2S]-[ferredoxin]</text>
        <dbReference type="Rhea" id="RHEA:22060"/>
        <dbReference type="Rhea" id="RHEA-COMP:10000"/>
        <dbReference type="Rhea" id="RHEA-COMP:10001"/>
        <dbReference type="Rhea" id="RHEA-COMP:14737"/>
        <dbReference type="Rhea" id="RHEA-COMP:14739"/>
        <dbReference type="ChEBI" id="CHEBI:17319"/>
        <dbReference type="ChEBI" id="CHEBI:29917"/>
        <dbReference type="ChEBI" id="CHEBI:33737"/>
        <dbReference type="ChEBI" id="CHEBI:33738"/>
        <dbReference type="ChEBI" id="CHEBI:57586"/>
        <dbReference type="ChEBI" id="CHEBI:57844"/>
        <dbReference type="ChEBI" id="CHEBI:59789"/>
        <dbReference type="ChEBI" id="CHEBI:64428"/>
        <dbReference type="ChEBI" id="CHEBI:149473"/>
        <dbReference type="EC" id="2.8.1.6"/>
    </reaction>
</comment>
<comment type="cofactor">
    <cofactor evidence="1">
        <name>[4Fe-4S] cluster</name>
        <dbReference type="ChEBI" id="CHEBI:49883"/>
    </cofactor>
    <text evidence="1">Binds 1 [4Fe-4S] cluster. The cluster is coordinated with 3 cysteines and an exchangeable S-adenosyl-L-methionine.</text>
</comment>
<comment type="cofactor">
    <cofactor evidence="1">
        <name>[2Fe-2S] cluster</name>
        <dbReference type="ChEBI" id="CHEBI:190135"/>
    </cofactor>
    <text evidence="1">Binds 1 [2Fe-2S] cluster. The cluster is coordinated with 3 cysteines and 1 arginine.</text>
</comment>
<comment type="pathway">
    <text evidence="1">Cofactor biosynthesis; biotin biosynthesis; biotin from 7,8-diaminononanoate: step 2/2.</text>
</comment>
<comment type="subunit">
    <text evidence="1">Homodimer.</text>
</comment>
<comment type="similarity">
    <text evidence="1">Belongs to the radical SAM superfamily. Biotin synthase family.</text>
</comment>
<proteinExistence type="inferred from homology"/>
<sequence length="339" mass="37146">MTQAQTVAVQSDAIPMAAPAPQRWRVADVVALFELPFNDLMFRAQQVHREHFDANAVQLSTLLSIKTGGCEEDCGYCSQSSHHDTGLKAEKLMDVDTVLDAARAAKANGASRFCMGAAWRNPKERHMPALTEMVRGVKELGLETCMTLGMLEDEQARQLADAGLDYYNHNLDTSPEFYGQVISTRTYQDRLDTLDRVRDAGINVCCGGIIGMGESRRERAGLISQLANLNPYPESVPINNLVAIEGTPLEGTAPLDPFEFVRTIAVARITMPKAVVRLSAGREQLDDAMQAMCFLAGANSMFYGDQLLTTSNPQTQRDRALFERLGIRASQADALSDNA</sequence>
<gene>
    <name evidence="1" type="primary">bioB</name>
    <name type="ordered locus">BceJ2315_06580</name>
    <name type="ORF">BCAL0664</name>
</gene>
<keyword id="KW-0001">2Fe-2S</keyword>
<keyword id="KW-0004">4Fe-4S</keyword>
<keyword id="KW-0093">Biotin biosynthesis</keyword>
<keyword id="KW-0408">Iron</keyword>
<keyword id="KW-0411">Iron-sulfur</keyword>
<keyword id="KW-0479">Metal-binding</keyword>
<keyword id="KW-0949">S-adenosyl-L-methionine</keyword>
<keyword id="KW-0808">Transferase</keyword>
<feature type="chain" id="PRO_0000381262" description="Biotin synthase">
    <location>
        <begin position="1"/>
        <end position="339"/>
    </location>
</feature>
<feature type="domain" description="Radical SAM core" evidence="2">
    <location>
        <begin position="55"/>
        <end position="282"/>
    </location>
</feature>
<feature type="binding site" evidence="1">
    <location>
        <position position="70"/>
    </location>
    <ligand>
        <name>[4Fe-4S] cluster</name>
        <dbReference type="ChEBI" id="CHEBI:49883"/>
        <note>4Fe-4S-S-AdoMet</note>
    </ligand>
</feature>
<feature type="binding site" evidence="1">
    <location>
        <position position="74"/>
    </location>
    <ligand>
        <name>[4Fe-4S] cluster</name>
        <dbReference type="ChEBI" id="CHEBI:49883"/>
        <note>4Fe-4S-S-AdoMet</note>
    </ligand>
</feature>
<feature type="binding site" evidence="1">
    <location>
        <position position="77"/>
    </location>
    <ligand>
        <name>[4Fe-4S] cluster</name>
        <dbReference type="ChEBI" id="CHEBI:49883"/>
        <note>4Fe-4S-S-AdoMet</note>
    </ligand>
</feature>
<feature type="binding site" evidence="1">
    <location>
        <position position="114"/>
    </location>
    <ligand>
        <name>[2Fe-2S] cluster</name>
        <dbReference type="ChEBI" id="CHEBI:190135"/>
    </ligand>
</feature>
<feature type="binding site" evidence="1">
    <location>
        <position position="145"/>
    </location>
    <ligand>
        <name>[2Fe-2S] cluster</name>
        <dbReference type="ChEBI" id="CHEBI:190135"/>
    </ligand>
</feature>
<feature type="binding site" evidence="1">
    <location>
        <position position="205"/>
    </location>
    <ligand>
        <name>[2Fe-2S] cluster</name>
        <dbReference type="ChEBI" id="CHEBI:190135"/>
    </ligand>
</feature>
<feature type="binding site" evidence="1">
    <location>
        <position position="277"/>
    </location>
    <ligand>
        <name>[2Fe-2S] cluster</name>
        <dbReference type="ChEBI" id="CHEBI:190135"/>
    </ligand>
</feature>
<accession>B4E9L4</accession>
<organism>
    <name type="scientific">Burkholderia cenocepacia (strain ATCC BAA-245 / DSM 16553 / LMG 16656 / NCTC 13227 / J2315 / CF5610)</name>
    <name type="common">Burkholderia cepacia (strain J2315)</name>
    <dbReference type="NCBI Taxonomy" id="216591"/>
    <lineage>
        <taxon>Bacteria</taxon>
        <taxon>Pseudomonadati</taxon>
        <taxon>Pseudomonadota</taxon>
        <taxon>Betaproteobacteria</taxon>
        <taxon>Burkholderiales</taxon>
        <taxon>Burkholderiaceae</taxon>
        <taxon>Burkholderia</taxon>
        <taxon>Burkholderia cepacia complex</taxon>
    </lineage>
</organism>
<reference key="1">
    <citation type="journal article" date="2009" name="J. Bacteriol.">
        <title>The genome of Burkholderia cenocepacia J2315, an epidemic pathogen of cystic fibrosis patients.</title>
        <authorList>
            <person name="Holden M.T."/>
            <person name="Seth-Smith H.M."/>
            <person name="Crossman L.C."/>
            <person name="Sebaihia M."/>
            <person name="Bentley S.D."/>
            <person name="Cerdeno-Tarraga A.M."/>
            <person name="Thomson N.R."/>
            <person name="Bason N."/>
            <person name="Quail M.A."/>
            <person name="Sharp S."/>
            <person name="Cherevach I."/>
            <person name="Churcher C."/>
            <person name="Goodhead I."/>
            <person name="Hauser H."/>
            <person name="Holroyd N."/>
            <person name="Mungall K."/>
            <person name="Scott P."/>
            <person name="Walker D."/>
            <person name="White B."/>
            <person name="Rose H."/>
            <person name="Iversen P."/>
            <person name="Mil-Homens D."/>
            <person name="Rocha E.P."/>
            <person name="Fialho A.M."/>
            <person name="Baldwin A."/>
            <person name="Dowson C."/>
            <person name="Barrell B.G."/>
            <person name="Govan J.R."/>
            <person name="Vandamme P."/>
            <person name="Hart C.A."/>
            <person name="Mahenthiralingam E."/>
            <person name="Parkhill J."/>
        </authorList>
    </citation>
    <scope>NUCLEOTIDE SEQUENCE [LARGE SCALE GENOMIC DNA]</scope>
    <source>
        <strain>ATCC BAA-245 / DSM 16553 / LMG 16656 / NCTC 13227 / J2315 / CF5610</strain>
    </source>
</reference>
<name>BIOB_BURCJ</name>
<protein>
    <recommendedName>
        <fullName evidence="1">Biotin synthase</fullName>
        <ecNumber evidence="1">2.8.1.6</ecNumber>
    </recommendedName>
</protein>
<evidence type="ECO:0000255" key="1">
    <source>
        <dbReference type="HAMAP-Rule" id="MF_01694"/>
    </source>
</evidence>
<evidence type="ECO:0000255" key="2">
    <source>
        <dbReference type="PROSITE-ProRule" id="PRU01266"/>
    </source>
</evidence>